<gene>
    <name type="primary">RGT1</name>
    <name type="ordered locus">CAGL0L01903g</name>
</gene>
<name>RGT1_CANGA</name>
<protein>
    <recommendedName>
        <fullName>Glucose transport transcription regulator RGT1</fullName>
    </recommendedName>
    <alternativeName>
        <fullName>Restores glucose transport protein 1</fullName>
    </alternativeName>
</protein>
<reference key="1">
    <citation type="journal article" date="2004" name="Nature">
        <title>Genome evolution in yeasts.</title>
        <authorList>
            <person name="Dujon B."/>
            <person name="Sherman D."/>
            <person name="Fischer G."/>
            <person name="Durrens P."/>
            <person name="Casaregola S."/>
            <person name="Lafontaine I."/>
            <person name="de Montigny J."/>
            <person name="Marck C."/>
            <person name="Neuveglise C."/>
            <person name="Talla E."/>
            <person name="Goffard N."/>
            <person name="Frangeul L."/>
            <person name="Aigle M."/>
            <person name="Anthouard V."/>
            <person name="Babour A."/>
            <person name="Barbe V."/>
            <person name="Barnay S."/>
            <person name="Blanchin S."/>
            <person name="Beckerich J.-M."/>
            <person name="Beyne E."/>
            <person name="Bleykasten C."/>
            <person name="Boisrame A."/>
            <person name="Boyer J."/>
            <person name="Cattolico L."/>
            <person name="Confanioleri F."/>
            <person name="de Daruvar A."/>
            <person name="Despons L."/>
            <person name="Fabre E."/>
            <person name="Fairhead C."/>
            <person name="Ferry-Dumazet H."/>
            <person name="Groppi A."/>
            <person name="Hantraye F."/>
            <person name="Hennequin C."/>
            <person name="Jauniaux N."/>
            <person name="Joyet P."/>
            <person name="Kachouri R."/>
            <person name="Kerrest A."/>
            <person name="Koszul R."/>
            <person name="Lemaire M."/>
            <person name="Lesur I."/>
            <person name="Ma L."/>
            <person name="Muller H."/>
            <person name="Nicaud J.-M."/>
            <person name="Nikolski M."/>
            <person name="Oztas S."/>
            <person name="Ozier-Kalogeropoulos O."/>
            <person name="Pellenz S."/>
            <person name="Potier S."/>
            <person name="Richard G.-F."/>
            <person name="Straub M.-L."/>
            <person name="Suleau A."/>
            <person name="Swennen D."/>
            <person name="Tekaia F."/>
            <person name="Wesolowski-Louvel M."/>
            <person name="Westhof E."/>
            <person name="Wirth B."/>
            <person name="Zeniou-Meyer M."/>
            <person name="Zivanovic Y."/>
            <person name="Bolotin-Fukuhara M."/>
            <person name="Thierry A."/>
            <person name="Bouchier C."/>
            <person name="Caudron B."/>
            <person name="Scarpelli C."/>
            <person name="Gaillardin C."/>
            <person name="Weissenbach J."/>
            <person name="Wincker P."/>
            <person name="Souciet J.-L."/>
        </authorList>
    </citation>
    <scope>NUCLEOTIDE SEQUENCE [LARGE SCALE GENOMIC DNA]</scope>
    <source>
        <strain>ATCC 2001 / BCRC 20586 / JCM 3761 / NBRC 0622 / NRRL Y-65 / CBS 138</strain>
    </source>
</reference>
<organism>
    <name type="scientific">Candida glabrata (strain ATCC 2001 / BCRC 20586 / JCM 3761 / NBRC 0622 / NRRL Y-65 / CBS 138)</name>
    <name type="common">Yeast</name>
    <name type="synonym">Nakaseomyces glabratus</name>
    <dbReference type="NCBI Taxonomy" id="284593"/>
    <lineage>
        <taxon>Eukaryota</taxon>
        <taxon>Fungi</taxon>
        <taxon>Dikarya</taxon>
        <taxon>Ascomycota</taxon>
        <taxon>Saccharomycotina</taxon>
        <taxon>Saccharomycetes</taxon>
        <taxon>Saccharomycetales</taxon>
        <taxon>Saccharomycetaceae</taxon>
        <taxon>Nakaseomyces</taxon>
    </lineage>
</organism>
<accession>Q6FLP2</accession>
<feature type="chain" id="PRO_0000408013" description="Glucose transport transcription regulator RGT1">
    <location>
        <begin position="1"/>
        <end position="1287"/>
    </location>
</feature>
<feature type="DNA-binding region" description="Zn(2)-C6 fungal-type" evidence="2">
    <location>
        <begin position="16"/>
        <end position="45"/>
    </location>
</feature>
<feature type="region of interest" description="Disordered" evidence="3">
    <location>
        <begin position="49"/>
        <end position="152"/>
    </location>
</feature>
<feature type="region of interest" description="Disordered" evidence="3">
    <location>
        <begin position="235"/>
        <end position="255"/>
    </location>
</feature>
<feature type="region of interest" description="Disordered" evidence="3">
    <location>
        <begin position="288"/>
        <end position="308"/>
    </location>
</feature>
<feature type="region of interest" description="Disordered" evidence="3">
    <location>
        <begin position="321"/>
        <end position="379"/>
    </location>
</feature>
<feature type="region of interest" description="Disordered" evidence="3">
    <location>
        <begin position="412"/>
        <end position="467"/>
    </location>
</feature>
<feature type="region of interest" description="Disordered" evidence="3">
    <location>
        <begin position="489"/>
        <end position="541"/>
    </location>
</feature>
<feature type="region of interest" description="Disordered" evidence="3">
    <location>
        <begin position="636"/>
        <end position="675"/>
    </location>
</feature>
<feature type="region of interest" description="Disordered" evidence="3">
    <location>
        <begin position="789"/>
        <end position="849"/>
    </location>
</feature>
<feature type="compositionally biased region" description="Low complexity" evidence="3">
    <location>
        <begin position="69"/>
        <end position="79"/>
    </location>
</feature>
<feature type="compositionally biased region" description="Polar residues" evidence="3">
    <location>
        <begin position="105"/>
        <end position="121"/>
    </location>
</feature>
<feature type="compositionally biased region" description="Polar residues" evidence="3">
    <location>
        <begin position="240"/>
        <end position="255"/>
    </location>
</feature>
<feature type="compositionally biased region" description="Polar residues" evidence="3">
    <location>
        <begin position="295"/>
        <end position="308"/>
    </location>
</feature>
<feature type="compositionally biased region" description="Low complexity" evidence="3">
    <location>
        <begin position="329"/>
        <end position="351"/>
    </location>
</feature>
<feature type="compositionally biased region" description="Polar residues" evidence="3">
    <location>
        <begin position="352"/>
        <end position="365"/>
    </location>
</feature>
<feature type="compositionally biased region" description="Low complexity" evidence="3">
    <location>
        <begin position="370"/>
        <end position="379"/>
    </location>
</feature>
<feature type="compositionally biased region" description="Polar residues" evidence="3">
    <location>
        <begin position="412"/>
        <end position="431"/>
    </location>
</feature>
<feature type="compositionally biased region" description="Low complexity" evidence="3">
    <location>
        <begin position="432"/>
        <end position="446"/>
    </location>
</feature>
<feature type="compositionally biased region" description="Basic and acidic residues" evidence="3">
    <location>
        <begin position="456"/>
        <end position="467"/>
    </location>
</feature>
<feature type="compositionally biased region" description="Basic and acidic residues" evidence="3">
    <location>
        <begin position="492"/>
        <end position="501"/>
    </location>
</feature>
<feature type="compositionally biased region" description="Basic residues" evidence="3">
    <location>
        <begin position="502"/>
        <end position="517"/>
    </location>
</feature>
<feature type="compositionally biased region" description="Polar residues" evidence="3">
    <location>
        <begin position="665"/>
        <end position="675"/>
    </location>
</feature>
<feature type="compositionally biased region" description="Low complexity" evidence="3">
    <location>
        <begin position="789"/>
        <end position="800"/>
    </location>
</feature>
<feature type="compositionally biased region" description="Low complexity" evidence="3">
    <location>
        <begin position="821"/>
        <end position="842"/>
    </location>
</feature>
<evidence type="ECO:0000250" key="1"/>
<evidence type="ECO:0000255" key="2">
    <source>
        <dbReference type="PROSITE-ProRule" id="PRU00227"/>
    </source>
</evidence>
<evidence type="ECO:0000256" key="3">
    <source>
        <dbReference type="SAM" id="MobiDB-lite"/>
    </source>
</evidence>
<evidence type="ECO:0000305" key="4"/>
<keyword id="KW-0010">Activator</keyword>
<keyword id="KW-0963">Cytoplasm</keyword>
<keyword id="KW-0238">DNA-binding</keyword>
<keyword id="KW-0479">Metal-binding</keyword>
<keyword id="KW-0539">Nucleus</keyword>
<keyword id="KW-1185">Reference proteome</keyword>
<keyword id="KW-0678">Repressor</keyword>
<keyword id="KW-0804">Transcription</keyword>
<keyword id="KW-0805">Transcription regulation</keyword>
<keyword id="KW-0862">Zinc</keyword>
<sequence length="1287" mass="143425">MPHNNDKKRTNVSRACDQCRRKKIKCDRNQERNICTSCQRNGERCKFERVPLKRGPSKGAHKASDPELKLSSNKPSKSSLFEDSNSIIRPKSVGEDSNMDPLSRHGSNTPILDNNSNSGINDRNMGGIDDRLGGSTDPGTPSRSGSILLPPLGQYPQQQNYTNNSTSASNNMLNSTSLNSTILQQQQPFWKVPYHEFQNQRRGSIESLQSDLSVRTFNPQDQLVYNTFQQSPIAMKHSSDPTNSIPPNTKSQHLTTTSNIGSVVGANDLLSGNPNYWGSVRAGSFIPNGDENDDQIPQNLQRRSSSIPSILRNTSTSILLSQPQLPHPTNGAGSTSNNFNNTNDNSNLINNKGTGSTAGLGNNIDNAVGSASPQAQRQSQQLYSYSQFLNQSKPYNNQNFSSFGQFSTNGFQSRHGSITSEAMSPSTALGYNQNNSNNLPGANNPNISDISLLPNKESDPRVNDSQKVVKTEVSNDIFQFGEQNLANTIESNADKSEDKVKSGGKKGGKVPRKRKTKQVKESNKKLKVNKKSNFDSDSINSPKVPTPVQQIKTGFQYGQILDVELIDLYYEFIHVGFPVIPLNKQTLTNDILLVNTHPYSNIHEVNSYVILWFRNSLELLVRVALKRKNDSPFFDSHNTPGPLRSASGDENMAFNDTPKKKDITSSHADSISSGDDNGMAEVQSAFISALNECFQRVVDIHPKVRENKDRISPKIKIIYLTTFILLNYILALVGYDNSFVLGMSVTIFNEFKLYKLLVLPYKAICQDSEFSFNAKQSISLDDDFIENKNIGNGNGNRTNGSTPGEPNNDEGENALTNFNPSKEQQNSQKGGSGEGNENQGNQIRSKIGKAVNIEEETETNENYTIMFKRLYILLTMFDSLQSCLFGGPKLLNVCITNTTEKFFSGTTNSKWNIEDSLVREKGALISLKLGETLSEIASNRIIMNHFDIITLTNNNQANATDIVFNLKKLSNNRDYDNFLQENKGLELFDQQPLCISQLFHKMLIMKSSFTYQLLSLMDANNGNFVNMDLKRLEQIVESLCSLISVILQLLTLIMRLNPTNSIDLNYRPVTPTQRMEDMLSNKNTDSTDSISNSNKTNSGNDFYRRLLGLEHSNDIVYSDISRGVISPFAMAILHESHNIHELIKMTPTILIRVVMTLNVQDDTGNSVNNNATPGDHEEDMKLKRANTSQDLVYKLSNSMNDVVQIASLLSMIKPLKLFDHGFKTFESEDVLQGNDEDAKKRQRPVLKRLFYDTTNVPKPEAVDPLVVSLVNTGWNLLDDMELGFLPQ</sequence>
<comment type="function">
    <text evidence="1">Glucose-responsive transcription factor that regulates expression of several glucose transporter (HXT) genes in response to glucose. In the absence of glucose, it functions as a transcriptional repressor, whereas high concentrations of glucose cause it to function as a transcriptional activator. In cells growing on low levels of glucose, has a neutral role, neither repressing nor activating transcription (By similarity).</text>
</comment>
<comment type="subcellular location">
    <subcellularLocation>
        <location evidence="2">Nucleus</location>
    </subcellularLocation>
    <subcellularLocation>
        <location evidence="1">Cytoplasm</location>
    </subcellularLocation>
</comment>
<comment type="similarity">
    <text evidence="4">Belongs to the EDS1/RGT1 family.</text>
</comment>
<dbReference type="EMBL" id="CR380958">
    <property type="protein sequence ID" value="CAG61822.1"/>
    <property type="molecule type" value="Genomic_DNA"/>
</dbReference>
<dbReference type="RefSeq" id="XP_448852.1">
    <property type="nucleotide sequence ID" value="XM_448852.1"/>
</dbReference>
<dbReference type="SMR" id="Q6FLP2"/>
<dbReference type="FunCoup" id="Q6FLP2">
    <property type="interactions" value="387"/>
</dbReference>
<dbReference type="STRING" id="284593.Q6FLP2"/>
<dbReference type="EnsemblFungi" id="CAGL0L01903g-T">
    <property type="protein sequence ID" value="CAGL0L01903g-T-p1"/>
    <property type="gene ID" value="CAGL0L01903g"/>
</dbReference>
<dbReference type="GeneID" id="2890674"/>
<dbReference type="KEGG" id="cgr:2890674"/>
<dbReference type="CGD" id="CAL0135076">
    <property type="gene designation" value="RGT1"/>
</dbReference>
<dbReference type="VEuPathDB" id="FungiDB:CAGL0L01903g"/>
<dbReference type="eggNOG" id="ENOG502QRVJ">
    <property type="taxonomic scope" value="Eukaryota"/>
</dbReference>
<dbReference type="HOGENOM" id="CLU_006525_0_0_1"/>
<dbReference type="InParanoid" id="Q6FLP2"/>
<dbReference type="OMA" id="WFRNSLE"/>
<dbReference type="Proteomes" id="UP000002428">
    <property type="component" value="Chromosome L"/>
</dbReference>
<dbReference type="GO" id="GO:0005737">
    <property type="term" value="C:cytoplasm"/>
    <property type="evidence" value="ECO:0007669"/>
    <property type="project" value="UniProtKB-SubCell"/>
</dbReference>
<dbReference type="GO" id="GO:0005634">
    <property type="term" value="C:nucleus"/>
    <property type="evidence" value="ECO:0007669"/>
    <property type="project" value="UniProtKB-SubCell"/>
</dbReference>
<dbReference type="GO" id="GO:0001228">
    <property type="term" value="F:DNA-binding transcription activator activity, RNA polymerase II-specific"/>
    <property type="evidence" value="ECO:0007669"/>
    <property type="project" value="EnsemblFungi"/>
</dbReference>
<dbReference type="GO" id="GO:0001227">
    <property type="term" value="F:DNA-binding transcription repressor activity, RNA polymerase II-specific"/>
    <property type="evidence" value="ECO:0007669"/>
    <property type="project" value="EnsemblFungi"/>
</dbReference>
<dbReference type="GO" id="GO:0000978">
    <property type="term" value="F:RNA polymerase II cis-regulatory region sequence-specific DNA binding"/>
    <property type="evidence" value="ECO:0007669"/>
    <property type="project" value="EnsemblFungi"/>
</dbReference>
<dbReference type="GO" id="GO:0008270">
    <property type="term" value="F:zinc ion binding"/>
    <property type="evidence" value="ECO:0007669"/>
    <property type="project" value="InterPro"/>
</dbReference>
<dbReference type="GO" id="GO:0006006">
    <property type="term" value="P:glucose metabolic process"/>
    <property type="evidence" value="ECO:0007669"/>
    <property type="project" value="EnsemblFungi"/>
</dbReference>
<dbReference type="CDD" id="cd00067">
    <property type="entry name" value="GAL4"/>
    <property type="match status" value="1"/>
</dbReference>
<dbReference type="Gene3D" id="4.10.240.10">
    <property type="entry name" value="Zn(2)-C6 fungal-type DNA-binding domain"/>
    <property type="match status" value="1"/>
</dbReference>
<dbReference type="InterPro" id="IPR050797">
    <property type="entry name" value="Carb_Metab_Trans_Reg"/>
</dbReference>
<dbReference type="InterPro" id="IPR036864">
    <property type="entry name" value="Zn2-C6_fun-type_DNA-bd_sf"/>
</dbReference>
<dbReference type="InterPro" id="IPR001138">
    <property type="entry name" value="Zn2Cys6_DnaBD"/>
</dbReference>
<dbReference type="PANTHER" id="PTHR31668:SF26">
    <property type="entry name" value="GLUCOSE TRANSPORT TRANSCRIPTION REGULATOR RGT1-RELATED"/>
    <property type="match status" value="1"/>
</dbReference>
<dbReference type="PANTHER" id="PTHR31668">
    <property type="entry name" value="GLUCOSE TRANSPORT TRANSCRIPTION REGULATOR RGT1-RELATED-RELATED"/>
    <property type="match status" value="1"/>
</dbReference>
<dbReference type="Pfam" id="PF00172">
    <property type="entry name" value="Zn_clus"/>
    <property type="match status" value="1"/>
</dbReference>
<dbReference type="SMART" id="SM00066">
    <property type="entry name" value="GAL4"/>
    <property type="match status" value="1"/>
</dbReference>
<dbReference type="SUPFAM" id="SSF57701">
    <property type="entry name" value="Zn2/Cys6 DNA-binding domain"/>
    <property type="match status" value="1"/>
</dbReference>
<dbReference type="PROSITE" id="PS00463">
    <property type="entry name" value="ZN2_CY6_FUNGAL_1"/>
    <property type="match status" value="1"/>
</dbReference>
<dbReference type="PROSITE" id="PS50048">
    <property type="entry name" value="ZN2_CY6_FUNGAL_2"/>
    <property type="match status" value="1"/>
</dbReference>
<proteinExistence type="inferred from homology"/>